<keyword id="KW-1003">Cell membrane</keyword>
<keyword id="KW-1015">Disulfide bond</keyword>
<keyword id="KW-0325">Glycoprotein</keyword>
<keyword id="KW-0407">Ion channel</keyword>
<keyword id="KW-0406">Ion transport</keyword>
<keyword id="KW-0472">Membrane</keyword>
<keyword id="KW-0597">Phosphoprotein</keyword>
<keyword id="KW-1185">Reference proteome</keyword>
<keyword id="KW-0915">Sodium</keyword>
<keyword id="KW-0894">Sodium channel</keyword>
<keyword id="KW-0739">Sodium transport</keyword>
<keyword id="KW-0812">Transmembrane</keyword>
<keyword id="KW-1133">Transmembrane helix</keyword>
<keyword id="KW-0813">Transport</keyword>
<keyword id="KW-0832">Ubl conjugation</keyword>
<feature type="chain" id="PRO_0000181279" description="Epithelial sodium channel subunit gamma">
    <location>
        <begin position="1"/>
        <end position="650"/>
    </location>
</feature>
<feature type="topological domain" description="Cytoplasmic" evidence="1">
    <location>
        <begin position="1"/>
        <end position="55"/>
    </location>
</feature>
<feature type="transmembrane region" description="Helical; Name=1" evidence="3">
    <location>
        <begin position="56"/>
        <end position="76"/>
    </location>
</feature>
<feature type="topological domain" description="Extracellular" evidence="1">
    <location>
        <begin position="77"/>
        <end position="542"/>
    </location>
</feature>
<feature type="transmembrane region" description="Helical; Name=2" evidence="3">
    <location>
        <begin position="543"/>
        <end position="563"/>
    </location>
</feature>
<feature type="topological domain" description="Cytoplasmic" evidence="1">
    <location>
        <begin position="564"/>
        <end position="650"/>
    </location>
</feature>
<feature type="region of interest" description="Gating release of inhibition by proteolysis (GRIP); protease-sensitive region that is responsible for the proteolytic activation of the channel" evidence="1">
    <location>
        <begin position="135"/>
        <end position="222"/>
    </location>
</feature>
<feature type="region of interest" description="Disordered" evidence="4">
    <location>
        <begin position="577"/>
        <end position="628"/>
    </location>
</feature>
<feature type="short sequence motif" description="PY motif; mediates interaction, ubiquitination and inhibition by NEDD4 and NEDD4L" evidence="7">
    <location>
        <begin position="624"/>
        <end position="628"/>
    </location>
</feature>
<feature type="short sequence motif" description="PY motif; recruits WW domain-containing proteins and is thereby required for ubiquitination and inhibition of the channel by NEDD4 and NEDD4L" evidence="1">
    <location>
        <begin position="624"/>
        <end position="628"/>
    </location>
</feature>
<feature type="compositionally biased region" description="Polar residues" evidence="4">
    <location>
        <begin position="579"/>
        <end position="593"/>
    </location>
</feature>
<feature type="site" description="Cleavage; by furin" evidence="2">
    <location>
        <begin position="138"/>
        <end position="139"/>
    </location>
</feature>
<feature type="site" description="Cleavage; by PRSS8" evidence="2">
    <location>
        <begin position="181"/>
        <end position="182"/>
    </location>
</feature>
<feature type="glycosylation site" description="N-linked (GlcNAc...) asparagine" evidence="3">
    <location>
        <position position="210"/>
    </location>
</feature>
<feature type="glycosylation site" description="N-linked (GlcNAc...) asparagine" evidence="3">
    <location>
        <position position="272"/>
    </location>
</feature>
<feature type="glycosylation site" description="N-linked (GlcNAc...) asparagine" evidence="3">
    <location>
        <position position="498"/>
    </location>
</feature>
<feature type="disulfide bond" evidence="1">
    <location>
        <begin position="100"/>
        <end position="284"/>
    </location>
</feature>
<feature type="disulfide bond" evidence="1">
    <location>
        <begin position="208"/>
        <end position="215"/>
    </location>
</feature>
<feature type="disulfide bond" evidence="1">
    <location>
        <begin position="261"/>
        <end position="268"/>
    </location>
</feature>
<feature type="disulfide bond" evidence="1">
    <location>
        <begin position="373"/>
        <end position="458"/>
    </location>
</feature>
<feature type="disulfide bond" evidence="1">
    <location>
        <begin position="395"/>
        <end position="454"/>
    </location>
</feature>
<feature type="disulfide bond" evidence="1">
    <location>
        <begin position="399"/>
        <end position="450"/>
    </location>
</feature>
<feature type="disulfide bond" evidence="1">
    <location>
        <begin position="408"/>
        <end position="435"/>
    </location>
</feature>
<feature type="disulfide bond" evidence="1">
    <location>
        <begin position="410"/>
        <end position="424"/>
    </location>
</feature>
<feature type="mutagenesis site" description="Loss of ubiquitination. Increased expression of functional channels at the plasma membrane; when associated with R-13." evidence="12">
    <original>K</original>
    <variation>R</variation>
    <location>
        <position position="6"/>
    </location>
</feature>
<feature type="mutagenesis site" description="Loss of ubiquitination. Increased expression of functional channels at the plasma membrane; when associated with R-6." evidence="12">
    <original>K</original>
    <variation>R</variation>
    <location>
        <position position="13"/>
    </location>
</feature>
<feature type="mutagenesis site" description="Decreased sodium ion transmembrane transport. Decreased channel open probability." evidence="11">
    <original>G</original>
    <variation>S</variation>
    <location>
        <position position="40"/>
    </location>
</feature>
<feature type="sequence conflict" description="In Ref. 1; CAA54905." evidence="16" ref="1">
    <original>R</original>
    <variation>P</variation>
    <location>
        <position position="53"/>
    </location>
</feature>
<feature type="sequence conflict" description="In Ref. 1; CAA54905." evidence="16" ref="1">
    <original>W</original>
    <variation>C</variation>
    <location>
        <position position="573"/>
    </location>
</feature>
<name>SCNNG_RAT</name>
<comment type="function">
    <text evidence="1 8 9 11">This is one of the three pore-forming subunits of the heterotrimeric epithelial sodium channel (ENaC), a critical regulator of sodium balance and fluid homeostasis (PubMed:8107805, PubMed:8188647, PubMed:9118951). ENaC operates in epithelial tissues, where it mediates the electrodiffusion of sodium ions from extracellular fluid through the apical membrane of cells, with water following osmotically (PubMed:8107805, PubMed:8188647, PubMed:9118951). It plays a key role in maintaining sodium homeostasis through electrogenic sodium reabsorption in the kidneys. Additionally, ENaC is essential for airway surface liquid homeostasis, which is crucial for proper mucus clearance (By similarity).</text>
</comment>
<comment type="catalytic activity">
    <reaction evidence="8 9">
        <text>Na(+)(in) = Na(+)(out)</text>
        <dbReference type="Rhea" id="RHEA:34963"/>
        <dbReference type="ChEBI" id="CHEBI:29101"/>
    </reaction>
</comment>
<comment type="activity regulation">
    <text evidence="8 9">Originally identified and characterized by its inhibition by the diuretic drug amiloride.</text>
</comment>
<comment type="subunit">
    <text evidence="1 8 9 11">Component of the heterotrimeric epithelial sodium channel (ENaC) composed of an alpha/SCNN1A, a beta/SCNN1B and a gamma/SCNN1G subunit (PubMed:8107805, PubMed:8188647, PubMed:9118951). Interacts with WWP1 (via WW domains) (By similarity). Interacts with WWP2 (via WW domains); inhibits the channel (By similarity). Interacts with the full-length immature form of PCSK9 (pro-PCSK9); inhibits ENaC by promoting its proteasomal degradation (By similarity). Interacts with BPIFA1; the interaction is indirect via SCNN1B and inhibits the proteolytic maturation of SCNN1A and SCNN1G and the activation of ENaC (By similarity).</text>
</comment>
<comment type="subcellular location">
    <subcellularLocation>
        <location evidence="9 11 12">Apical cell membrane</location>
        <topology evidence="1">Multi-pass membrane protein</topology>
    </subcellularLocation>
</comment>
<comment type="PTM">
    <text evidence="13">Phosphorylated on serine and threonine residues. Aldosterone and insulin increase the basal level of phosphorylation.</text>
</comment>
<comment type="PTM">
    <text evidence="5 6 7 10 12">Ubiquitinated. Can be ubiquitinated at multiple sites and undergo monoubiquitination and polyubiquitination. Ubiquitination by NEDD4 or NEDD4L inhibits the ENaC channel through endocytosis, intracellular retention and degradation of its individual subunits.</text>
</comment>
<comment type="PTM">
    <text evidence="1">ENaC is activated through the proteolytic maturation of its subunits. Furin cleaves the SCNN1G subunit first, followed by cleavage by prostasin (PRSS8), which results in a stepwise increase in the open probability of the channel due to the release of an inhibitory tract. BPIFA1, which is recruited by the SCNN1B subunit, prevents the proteolytic activation of ENaC.</text>
</comment>
<comment type="PTM">
    <text evidence="2">N-glycosylated. N-linked glycans are processed to complex type during ENaC complex assembly and transport to the plasma membrane.</text>
</comment>
<comment type="similarity">
    <text evidence="16">Belongs to the amiloride-sensitive sodium channel (TC 1.A.6) family. SCNN1G subfamily.</text>
</comment>
<gene>
    <name evidence="18" type="primary">Scnn1g</name>
    <name evidence="15" type="synonym">RCNaCh2</name>
</gene>
<accession>P37091</accession>
<sequence>MAPGEKIKAKIKKNLPVRGPQAPTIKDLMHWYCMNTNTHGCRRIVVSRGRLRRLLWIAFTLTAVALIIWQCALLVFSFYTVSVSIKVHFQKLDFPAVTICNINPYKYSAVSDLLTDLDSETKQALLSLYGVKESRKRREAGSMPSTLEGTPPRFFKLIPLLVFNENEKGKARDFFTGRKRKISGKIIHKASNVMHVHESKKLVGFQLCSNDTSDCATYTFSSGINAIQEWYKLHYMNIMAQVPLEKKINMSYSAEELLVTCFFDGMSCDARNFTLFHHPMYGNCYTFNNKENATILSTSMGGSEYGLQVILYINEDEYNPFLVSSTGAKVLIHQQNEYPFIEDVGMEIETAMSTSIGMHLTESFKLSEPYSQCTEDGSDVPVTNIYNAAYSLQICLYSCFQTKMVEKCGCAQYSQPLPPAANYCNYQQHPNWMYCYYQLYQAFVREELGCQSVCKQSCSFKEWTLTTSLAQWPSEASEKWLLNVLTWDQSQQINKKLNKTDLAKLLIFYKDLNQRSIMESPANSIEMLLSNFGGQLGLWMSCSVVCVIEIIEVFFIDFFSIIARRQWHKAKDWWARRQTPPSTETPSSRQGQDNPALDTDDDLPTFTSAMRLPPAPGSTVPGTPPPRYNTLRLDRAFSSQLTDTQLTNEL</sequence>
<evidence type="ECO:0000250" key="1">
    <source>
        <dbReference type="UniProtKB" id="P51170"/>
    </source>
</evidence>
<evidence type="ECO:0000250" key="2">
    <source>
        <dbReference type="UniProtKB" id="Q9WU39"/>
    </source>
</evidence>
<evidence type="ECO:0000255" key="3"/>
<evidence type="ECO:0000256" key="4">
    <source>
        <dbReference type="SAM" id="MobiDB-lite"/>
    </source>
</evidence>
<evidence type="ECO:0000269" key="5">
    <source>
    </source>
</evidence>
<evidence type="ECO:0000269" key="6">
    <source>
    </source>
</evidence>
<evidence type="ECO:0000269" key="7">
    <source>
    </source>
</evidence>
<evidence type="ECO:0000269" key="8">
    <source>
    </source>
</evidence>
<evidence type="ECO:0000269" key="9">
    <source>
    </source>
</evidence>
<evidence type="ECO:0000269" key="10">
    <source>
    </source>
</evidence>
<evidence type="ECO:0000269" key="11">
    <source>
    </source>
</evidence>
<evidence type="ECO:0000269" key="12">
    <source>
    </source>
</evidence>
<evidence type="ECO:0000269" key="13">
    <source>
    </source>
</evidence>
<evidence type="ECO:0000303" key="14">
    <source>
    </source>
</evidence>
<evidence type="ECO:0000303" key="15">
    <source>
    </source>
</evidence>
<evidence type="ECO:0000305" key="16"/>
<evidence type="ECO:0000305" key="17">
    <source>
    </source>
</evidence>
<evidence type="ECO:0000312" key="18">
    <source>
        <dbReference type="RGD" id="3641"/>
    </source>
</evidence>
<organism>
    <name type="scientific">Rattus norvegicus</name>
    <name type="common">Rat</name>
    <dbReference type="NCBI Taxonomy" id="10116"/>
    <lineage>
        <taxon>Eukaryota</taxon>
        <taxon>Metazoa</taxon>
        <taxon>Chordata</taxon>
        <taxon>Craniata</taxon>
        <taxon>Vertebrata</taxon>
        <taxon>Euteleostomi</taxon>
        <taxon>Mammalia</taxon>
        <taxon>Eutheria</taxon>
        <taxon>Euarchontoglires</taxon>
        <taxon>Glires</taxon>
        <taxon>Rodentia</taxon>
        <taxon>Myomorpha</taxon>
        <taxon>Muroidea</taxon>
        <taxon>Muridae</taxon>
        <taxon>Murinae</taxon>
        <taxon>Rattus</taxon>
    </lineage>
</organism>
<protein>
    <recommendedName>
        <fullName evidence="17">Epithelial sodium channel subunit gamma</fullName>
        <shortName>Gamma-ENaC</shortName>
        <shortName>pithelial Na(+) channel subunit gamma</shortName>
    </recommendedName>
    <alternativeName>
        <fullName evidence="14">Amiloride-sensitive sodium channel subunit gamma</fullName>
    </alternativeName>
    <alternativeName>
        <fullName>Gamma-NaCH</fullName>
    </alternativeName>
    <alternativeName>
        <fullName>Nonvoltage-gated sodium channel 1 subunit gamma</fullName>
    </alternativeName>
    <alternativeName>
        <fullName>SCNEG</fullName>
    </alternativeName>
</protein>
<reference key="1">
    <citation type="journal article" date="1994" name="Nature">
        <title>Amiloride-sensitive epithelial Na+ channel is made of three homologous subunits.</title>
        <authorList>
            <person name="Canessa C.M."/>
            <person name="Schild L."/>
            <person name="Buell G."/>
            <person name="Thorens B."/>
            <person name="Gautschi I."/>
            <person name="Horisberger J.-D."/>
            <person name="Rossier B.C."/>
        </authorList>
    </citation>
    <scope>NUCLEOTIDE SEQUENCE [MRNA]</scope>
    <scope>FUNCTION</scope>
    <scope>TRANSPORTER ACTIVITY</scope>
    <scope>ACTIVITY REGULATION</scope>
    <scope>SUBUNIT</scope>
    <source>
        <strain>Sprague-Dawley</strain>
        <tissue>Distal colon epithelium</tissue>
    </source>
</reference>
<reference key="2">
    <citation type="journal article" date="1994" name="J. Biol. Chem.">
        <title>Different homologous subunits of the amiloride-sensitive Na+ channel are differently regulated by aldosterone.</title>
        <authorList>
            <person name="Lingueglia R."/>
            <person name="Renard S."/>
            <person name="Waldmann R."/>
            <person name="Voilley N."/>
            <person name="Champigny G."/>
            <person name="Plass H."/>
            <person name="Lazdunski M."/>
            <person name="Barbry P."/>
        </authorList>
    </citation>
    <scope>NUCLEOTIDE SEQUENCE [MRNA]</scope>
    <scope>FUNCTION</scope>
    <scope>TRANSPORTER ACTIVITY</scope>
    <scope>ACTIVITY REGULATION</scope>
    <scope>SUBUNIT</scope>
    <scope>SUBCELLULAR LOCATION</scope>
    <source>
        <strain>Wistar</strain>
        <tissue>Distal colon</tissue>
    </source>
</reference>
<reference key="3">
    <citation type="journal article" date="1997" name="Hypertension">
        <title>Role of the alpha-, beta-, and gamma-subunits of epithelial sodium channel in a model of polygenic hypertension.</title>
        <authorList>
            <person name="Kreutz R."/>
            <person name="Struk B."/>
            <person name="Rubattu S."/>
            <person name="Hubner N."/>
            <person name="Szpirer J."/>
            <person name="Szpirer C."/>
            <person name="Ganten D."/>
            <person name="Lindpaintner K."/>
        </authorList>
    </citation>
    <scope>NUCLEOTIDE SEQUENCE [MRNA]</scope>
    <source>
        <strain>Sprague-Dawley</strain>
        <tissue>Distal colon</tissue>
        <tissue>Kidney</tissue>
    </source>
</reference>
<reference key="4">
    <citation type="journal article" date="1996" name="EMBO J.">
        <title>WW domains of Nedd4 bind to the proline-rich PY motifs in the epithelial Na+ channel deleted in Liddle's syndrome.</title>
        <authorList>
            <person name="Staub O."/>
            <person name="Dho S."/>
            <person name="Henry P."/>
            <person name="Correa J."/>
            <person name="Ishikawa T."/>
            <person name="McGlade J."/>
            <person name="Rotin D."/>
        </authorList>
    </citation>
    <scope>UBIQUITINATION BY NEDD4</scope>
</reference>
<reference key="5">
    <citation type="journal article" date="1997" name="EMBO J.">
        <title>A mutation causing pseudohypoaldosteronism type 1 identifies a conserved glycine that is involved in the gating of the epithelial sodium channel.</title>
        <authorList>
            <person name="Gruender S."/>
            <person name="Firsov D."/>
            <person name="Chang S.S."/>
            <person name="Jaeger N.F."/>
            <person name="Gautschi I."/>
            <person name="Schild L."/>
            <person name="Lifton R.P."/>
            <person name="Rossier B.C."/>
        </authorList>
    </citation>
    <scope>FUNCTION</scope>
    <scope>INTERACTION WITH SCNN1A AND SCNN1B</scope>
    <scope>SUBCELLULAR LOCATION</scope>
    <scope>MUTAGENESIS OF GLY-40</scope>
</reference>
<reference key="6">
    <citation type="journal article" date="1997" name="EMBO J.">
        <title>Regulation of stability and function of the epithelial Na+ channel (ENaC) by ubiquitination.</title>
        <authorList>
            <person name="Staub O."/>
            <person name="Gautschi I."/>
            <person name="Ishikawa T."/>
            <person name="Breitschopf K."/>
            <person name="Ciechanover A."/>
            <person name="Schild L."/>
            <person name="Rotin D."/>
        </authorList>
    </citation>
    <scope>SUBCELLULAR LOCATION</scope>
    <scope>MUTAGENESIS OF LYS-6 AND LYS-13</scope>
    <scope>UBIQUITINATION</scope>
</reference>
<reference key="7">
    <citation type="journal article" date="1998" name="Proc. Natl. Acad. Sci. U.S.A.">
        <title>In vivo phosphorylation of the epithelial sodium channel.</title>
        <authorList>
            <person name="Shimkets R.A."/>
            <person name="Lifton R."/>
            <person name="Canessa C.M."/>
        </authorList>
    </citation>
    <scope>PHOSPHORYLATION</scope>
</reference>
<reference key="8">
    <citation type="journal article" date="2001" name="Nat. Struct. Biol.">
        <title>Solution structure of a Nedd4 WW domain-ENaC peptide complex.</title>
        <authorList>
            <person name="Kanelis V."/>
            <person name="Rotin D."/>
            <person name="Forman-Kay J.D."/>
        </authorList>
    </citation>
    <scope>UBIQUITINATION BY NEDD4</scope>
</reference>
<reference key="9">
    <citation type="journal article" date="2003" name="FASEB J.">
        <title>The role of individual Nedd4-2 (KIAA0439) WW domains in binding and regulating epithelial sodium channels.</title>
        <authorList>
            <person name="Fotia A.B."/>
            <person name="Dinudom A."/>
            <person name="Shearwin K.E."/>
            <person name="Koch J.-P."/>
            <person name="Korbmacher C."/>
            <person name="Cook D.I."/>
            <person name="Kumar S."/>
        </authorList>
    </citation>
    <scope>UBIQUITINATION</scope>
</reference>
<reference key="10">
    <citation type="journal article" date="2003" name="J. Biol. Chem.">
        <title>Affinity and specificity of interactions between Nedd4 isoforms and ENaC.</title>
        <authorList>
            <person name="Henry P.C."/>
            <person name="Kanelis V."/>
            <person name="O'Brien C.M."/>
            <person name="Kim B."/>
            <person name="Gautschi I."/>
            <person name="Forman-Kay J.D."/>
            <person name="Schild L."/>
            <person name="Rotin D."/>
        </authorList>
    </citation>
    <scope>UBIQUITINATION BY NEDD4 AND NEDD4L</scope>
    <scope>MOTIF</scope>
</reference>
<proteinExistence type="evidence at protein level"/>
<dbReference type="EMBL" id="X77933">
    <property type="protein sequence ID" value="CAA54905.1"/>
    <property type="molecule type" value="mRNA"/>
</dbReference>
<dbReference type="EMBL" id="X78034">
    <property type="protein sequence ID" value="CAA54964.1"/>
    <property type="molecule type" value="mRNA"/>
</dbReference>
<dbReference type="EMBL" id="U37539">
    <property type="protein sequence ID" value="AAB58459.1"/>
    <property type="molecule type" value="mRNA"/>
</dbReference>
<dbReference type="EMBL" id="U37540">
    <property type="protein sequence ID" value="AAB58460.1"/>
    <property type="molecule type" value="mRNA"/>
</dbReference>
<dbReference type="PIR" id="A54065">
    <property type="entry name" value="A54065"/>
</dbReference>
<dbReference type="RefSeq" id="NP_058742.1">
    <property type="nucleotide sequence ID" value="NM_017046.1"/>
</dbReference>
<dbReference type="SMR" id="P37091"/>
<dbReference type="BioGRID" id="246892">
    <property type="interactions" value="8"/>
</dbReference>
<dbReference type="ComplexPortal" id="CPX-314">
    <property type="entry name" value="Amiloride-sensitive sodium channel complex, alpha-beta-gamma"/>
</dbReference>
<dbReference type="DIP" id="DIP-61327N"/>
<dbReference type="ELM" id="P37091"/>
<dbReference type="FunCoup" id="P37091">
    <property type="interactions" value="94"/>
</dbReference>
<dbReference type="IntAct" id="P37091">
    <property type="interactions" value="3"/>
</dbReference>
<dbReference type="STRING" id="10116.ENSRNOP00000024057"/>
<dbReference type="GlyCosmos" id="P37091">
    <property type="glycosylation" value="3 sites, No reported glycans"/>
</dbReference>
<dbReference type="GlyGen" id="P37091">
    <property type="glycosylation" value="3 sites"/>
</dbReference>
<dbReference type="iPTMnet" id="P37091"/>
<dbReference type="PhosphoSitePlus" id="P37091"/>
<dbReference type="PaxDb" id="10116-ENSRNOP00000024057"/>
<dbReference type="GeneID" id="24768"/>
<dbReference type="KEGG" id="rno:24768"/>
<dbReference type="UCSC" id="RGD:3641">
    <property type="organism name" value="rat"/>
</dbReference>
<dbReference type="AGR" id="RGD:3641"/>
<dbReference type="CTD" id="6340"/>
<dbReference type="RGD" id="3641">
    <property type="gene designation" value="Scnn1g"/>
</dbReference>
<dbReference type="eggNOG" id="KOG4294">
    <property type="taxonomic scope" value="Eukaryota"/>
</dbReference>
<dbReference type="InParanoid" id="P37091"/>
<dbReference type="OrthoDB" id="6021021at2759"/>
<dbReference type="PhylomeDB" id="P37091"/>
<dbReference type="Reactome" id="R-RNO-2672351">
    <property type="pathway name" value="Stimuli-sensing channels"/>
</dbReference>
<dbReference type="Reactome" id="R-RNO-9730628">
    <property type="pathway name" value="Sensory perception of salty taste"/>
</dbReference>
<dbReference type="PRO" id="PR:P37091"/>
<dbReference type="Proteomes" id="UP000002494">
    <property type="component" value="Unplaced"/>
</dbReference>
<dbReference type="GO" id="GO:0016324">
    <property type="term" value="C:apical plasma membrane"/>
    <property type="evidence" value="ECO:0000314"/>
    <property type="project" value="UniProtKB"/>
</dbReference>
<dbReference type="GO" id="GO:0009986">
    <property type="term" value="C:cell surface"/>
    <property type="evidence" value="ECO:0000314"/>
    <property type="project" value="RGD"/>
</dbReference>
<dbReference type="GO" id="GO:0009897">
    <property type="term" value="C:external side of plasma membrane"/>
    <property type="evidence" value="ECO:0000266"/>
    <property type="project" value="RGD"/>
</dbReference>
<dbReference type="GO" id="GO:0070062">
    <property type="term" value="C:extracellular exosome"/>
    <property type="evidence" value="ECO:0000266"/>
    <property type="project" value="RGD"/>
</dbReference>
<dbReference type="GO" id="GO:0016020">
    <property type="term" value="C:membrane"/>
    <property type="evidence" value="ECO:0000266"/>
    <property type="project" value="RGD"/>
</dbReference>
<dbReference type="GO" id="GO:0005886">
    <property type="term" value="C:plasma membrane"/>
    <property type="evidence" value="ECO:0000250"/>
    <property type="project" value="UniProtKB"/>
</dbReference>
<dbReference type="GO" id="GO:0034706">
    <property type="term" value="C:sodium channel complex"/>
    <property type="evidence" value="ECO:0000353"/>
    <property type="project" value="ComplexPortal"/>
</dbReference>
<dbReference type="GO" id="GO:0015280">
    <property type="term" value="F:ligand-gated sodium channel activity"/>
    <property type="evidence" value="ECO:0000314"/>
    <property type="project" value="RGD"/>
</dbReference>
<dbReference type="GO" id="GO:0005216">
    <property type="term" value="F:monoatomic ion channel activity"/>
    <property type="evidence" value="ECO:0000266"/>
    <property type="project" value="RGD"/>
</dbReference>
<dbReference type="GO" id="GO:0050699">
    <property type="term" value="F:WW domain binding"/>
    <property type="evidence" value="ECO:0000353"/>
    <property type="project" value="RGD"/>
</dbReference>
<dbReference type="GO" id="GO:0071468">
    <property type="term" value="P:cellular response to acidic pH"/>
    <property type="evidence" value="ECO:0000266"/>
    <property type="project" value="RGD"/>
</dbReference>
<dbReference type="GO" id="GO:1904045">
    <property type="term" value="P:cellular response to aldosterone"/>
    <property type="evidence" value="ECO:0000266"/>
    <property type="project" value="RGD"/>
</dbReference>
<dbReference type="GO" id="GO:1904117">
    <property type="term" value="P:cellular response to vasopressin"/>
    <property type="evidence" value="ECO:0000303"/>
    <property type="project" value="ComplexPortal"/>
</dbReference>
<dbReference type="GO" id="GO:0006883">
    <property type="term" value="P:intracellular sodium ion homeostasis"/>
    <property type="evidence" value="ECO:0000314"/>
    <property type="project" value="ComplexPortal"/>
</dbReference>
<dbReference type="GO" id="GO:0050891">
    <property type="term" value="P:multicellular organismal-level water homeostasis"/>
    <property type="evidence" value="ECO:0000250"/>
    <property type="project" value="UniProtKB"/>
</dbReference>
<dbReference type="GO" id="GO:0008217">
    <property type="term" value="P:regulation of blood pressure"/>
    <property type="evidence" value="ECO:0000303"/>
    <property type="project" value="ComplexPortal"/>
</dbReference>
<dbReference type="GO" id="GO:0001666">
    <property type="term" value="P:response to hypoxia"/>
    <property type="evidence" value="ECO:0000270"/>
    <property type="project" value="RGD"/>
</dbReference>
<dbReference type="GO" id="GO:0050914">
    <property type="term" value="P:sensory perception of salty taste"/>
    <property type="evidence" value="ECO:0000303"/>
    <property type="project" value="ComplexPortal"/>
</dbReference>
<dbReference type="GO" id="GO:0050915">
    <property type="term" value="P:sensory perception of sour taste"/>
    <property type="evidence" value="ECO:0000303"/>
    <property type="project" value="ComplexPortal"/>
</dbReference>
<dbReference type="GO" id="GO:0055078">
    <property type="term" value="P:sodium ion homeostasis"/>
    <property type="evidence" value="ECO:0000250"/>
    <property type="project" value="UniProtKB"/>
</dbReference>
<dbReference type="GO" id="GO:0098719">
    <property type="term" value="P:sodium ion import across plasma membrane"/>
    <property type="evidence" value="ECO:0000314"/>
    <property type="project" value="RGD"/>
</dbReference>
<dbReference type="GO" id="GO:0035725">
    <property type="term" value="P:sodium ion transmembrane transport"/>
    <property type="evidence" value="ECO:0000266"/>
    <property type="project" value="RGD"/>
</dbReference>
<dbReference type="GO" id="GO:0006814">
    <property type="term" value="P:sodium ion transport"/>
    <property type="evidence" value="ECO:0000314"/>
    <property type="project" value="RGD"/>
</dbReference>
<dbReference type="GO" id="GO:0035313">
    <property type="term" value="P:wound healing, spreading of epidermal cells"/>
    <property type="evidence" value="ECO:0000315"/>
    <property type="project" value="RGD"/>
</dbReference>
<dbReference type="FunFam" id="1.10.287.770:FF:000005">
    <property type="entry name" value="Amiloride-sensitive sodium channel subunit gamma"/>
    <property type="match status" value="1"/>
</dbReference>
<dbReference type="FunFam" id="2.60.470.10:FF:000005">
    <property type="entry name" value="Amiloride-sensitive sodium channel subunit gamma"/>
    <property type="match status" value="1"/>
</dbReference>
<dbReference type="Gene3D" id="2.60.470.10">
    <property type="entry name" value="Acid-sensing ion channels like domains"/>
    <property type="match status" value="1"/>
</dbReference>
<dbReference type="Gene3D" id="1.10.287.770">
    <property type="entry name" value="YojJ-like"/>
    <property type="match status" value="1"/>
</dbReference>
<dbReference type="InterPro" id="IPR001873">
    <property type="entry name" value="ENaC"/>
</dbReference>
<dbReference type="InterPro" id="IPR004724">
    <property type="entry name" value="ENaC_chordates"/>
</dbReference>
<dbReference type="InterPro" id="IPR020903">
    <property type="entry name" value="ENaC_CS"/>
</dbReference>
<dbReference type="NCBIfam" id="TIGR00859">
    <property type="entry name" value="ENaC"/>
    <property type="match status" value="1"/>
</dbReference>
<dbReference type="PANTHER" id="PTHR11690:SF19">
    <property type="entry name" value="AMILORIDE-SENSITIVE SODIUM CHANNEL SUBUNIT GAMMA"/>
    <property type="match status" value="1"/>
</dbReference>
<dbReference type="PANTHER" id="PTHR11690">
    <property type="entry name" value="AMILORIDE-SENSITIVE SODIUM CHANNEL-RELATED"/>
    <property type="match status" value="1"/>
</dbReference>
<dbReference type="Pfam" id="PF00858">
    <property type="entry name" value="ASC"/>
    <property type="match status" value="1"/>
</dbReference>
<dbReference type="PRINTS" id="PR01078">
    <property type="entry name" value="AMINACHANNEL"/>
</dbReference>
<dbReference type="PROSITE" id="PS01206">
    <property type="entry name" value="ASC"/>
    <property type="match status" value="1"/>
</dbReference>